<accession>C6DG46</accession>
<dbReference type="EMBL" id="CP001657">
    <property type="protein sequence ID" value="ACT12989.1"/>
    <property type="molecule type" value="Genomic_DNA"/>
</dbReference>
<dbReference type="RefSeq" id="WP_015840182.1">
    <property type="nucleotide sequence ID" value="NC_012917.1"/>
</dbReference>
<dbReference type="SMR" id="C6DG46"/>
<dbReference type="STRING" id="561230.PC1_1948"/>
<dbReference type="GeneID" id="67793947"/>
<dbReference type="KEGG" id="pct:PC1_1948"/>
<dbReference type="eggNOG" id="COG2186">
    <property type="taxonomic scope" value="Bacteria"/>
</dbReference>
<dbReference type="HOGENOM" id="CLU_017584_9_4_6"/>
<dbReference type="OrthoDB" id="5683977at2"/>
<dbReference type="Proteomes" id="UP000002736">
    <property type="component" value="Chromosome"/>
</dbReference>
<dbReference type="GO" id="GO:0005737">
    <property type="term" value="C:cytoplasm"/>
    <property type="evidence" value="ECO:0007669"/>
    <property type="project" value="UniProtKB-SubCell"/>
</dbReference>
<dbReference type="GO" id="GO:0003677">
    <property type="term" value="F:DNA binding"/>
    <property type="evidence" value="ECO:0007669"/>
    <property type="project" value="UniProtKB-KW"/>
</dbReference>
<dbReference type="GO" id="GO:0003700">
    <property type="term" value="F:DNA-binding transcription factor activity"/>
    <property type="evidence" value="ECO:0007669"/>
    <property type="project" value="UniProtKB-UniRule"/>
</dbReference>
<dbReference type="GO" id="GO:0000062">
    <property type="term" value="F:fatty-acyl-CoA binding"/>
    <property type="evidence" value="ECO:0007669"/>
    <property type="project" value="InterPro"/>
</dbReference>
<dbReference type="GO" id="GO:0006631">
    <property type="term" value="P:fatty acid metabolic process"/>
    <property type="evidence" value="ECO:0007669"/>
    <property type="project" value="UniProtKB-KW"/>
</dbReference>
<dbReference type="GO" id="GO:0019217">
    <property type="term" value="P:regulation of fatty acid metabolic process"/>
    <property type="evidence" value="ECO:0007669"/>
    <property type="project" value="UniProtKB-UniRule"/>
</dbReference>
<dbReference type="CDD" id="cd07377">
    <property type="entry name" value="WHTH_GntR"/>
    <property type="match status" value="1"/>
</dbReference>
<dbReference type="FunFam" id="1.10.10.10:FF:000036">
    <property type="entry name" value="Fatty acid metabolism regulator protein"/>
    <property type="match status" value="1"/>
</dbReference>
<dbReference type="Gene3D" id="1.20.120.530">
    <property type="entry name" value="GntR ligand-binding domain-like"/>
    <property type="match status" value="1"/>
</dbReference>
<dbReference type="Gene3D" id="1.10.10.10">
    <property type="entry name" value="Winged helix-like DNA-binding domain superfamily/Winged helix DNA-binding domain"/>
    <property type="match status" value="1"/>
</dbReference>
<dbReference type="HAMAP" id="MF_00696">
    <property type="entry name" value="HTH_FadR"/>
    <property type="match status" value="1"/>
</dbReference>
<dbReference type="InterPro" id="IPR014178">
    <property type="entry name" value="FA-response_TF_FadR"/>
</dbReference>
<dbReference type="InterPro" id="IPR028374">
    <property type="entry name" value="FadR_C"/>
</dbReference>
<dbReference type="InterPro" id="IPR008920">
    <property type="entry name" value="TF_FadR/GntR_C"/>
</dbReference>
<dbReference type="InterPro" id="IPR000524">
    <property type="entry name" value="Tscrpt_reg_HTH_GntR"/>
</dbReference>
<dbReference type="InterPro" id="IPR036388">
    <property type="entry name" value="WH-like_DNA-bd_sf"/>
</dbReference>
<dbReference type="InterPro" id="IPR036390">
    <property type="entry name" value="WH_DNA-bd_sf"/>
</dbReference>
<dbReference type="NCBIfam" id="TIGR02812">
    <property type="entry name" value="fadR_gamma"/>
    <property type="match status" value="1"/>
</dbReference>
<dbReference type="NCBIfam" id="NF003444">
    <property type="entry name" value="PRK04984.1"/>
    <property type="match status" value="1"/>
</dbReference>
<dbReference type="PANTHER" id="PTHR43537:SF52">
    <property type="entry name" value="FATTY ACID METABOLISM REGULATOR PROTEIN"/>
    <property type="match status" value="1"/>
</dbReference>
<dbReference type="PANTHER" id="PTHR43537">
    <property type="entry name" value="TRANSCRIPTIONAL REGULATOR, GNTR FAMILY"/>
    <property type="match status" value="1"/>
</dbReference>
<dbReference type="Pfam" id="PF07840">
    <property type="entry name" value="FadR_C"/>
    <property type="match status" value="1"/>
</dbReference>
<dbReference type="Pfam" id="PF00392">
    <property type="entry name" value="GntR"/>
    <property type="match status" value="1"/>
</dbReference>
<dbReference type="PRINTS" id="PR00035">
    <property type="entry name" value="HTHGNTR"/>
</dbReference>
<dbReference type="SMART" id="SM00345">
    <property type="entry name" value="HTH_GNTR"/>
    <property type="match status" value="1"/>
</dbReference>
<dbReference type="SUPFAM" id="SSF48008">
    <property type="entry name" value="GntR ligand-binding domain-like"/>
    <property type="match status" value="1"/>
</dbReference>
<dbReference type="SUPFAM" id="SSF46785">
    <property type="entry name" value="Winged helix' DNA-binding domain"/>
    <property type="match status" value="1"/>
</dbReference>
<dbReference type="PROSITE" id="PS50949">
    <property type="entry name" value="HTH_GNTR"/>
    <property type="match status" value="1"/>
</dbReference>
<feature type="chain" id="PRO_1000212634" description="Fatty acid metabolism regulator protein">
    <location>
        <begin position="1"/>
        <end position="239"/>
    </location>
</feature>
<feature type="domain" description="HTH gntR-type" evidence="1">
    <location>
        <begin position="6"/>
        <end position="74"/>
    </location>
</feature>
<feature type="DNA-binding region" description="H-T-H motif" evidence="1">
    <location>
        <begin position="34"/>
        <end position="53"/>
    </location>
</feature>
<name>FADR_PECCP</name>
<protein>
    <recommendedName>
        <fullName evidence="1">Fatty acid metabolism regulator protein</fullName>
    </recommendedName>
</protein>
<sequence length="239" mass="27080">MVIKAQSPAGFAEEYIIESIWNNRFPPGSILPAERELSELIGVTRTTLREVLQRLARDGWLTIQHGKPTKINNFWETSGLNILETLARLDHDSVPQLIDNLLAVRTNIAAIFIRTALRHNPEKVRDVLTQANAVDDSAEAFAQLDYNVFRGLAFASGNPIYGLILNGLKGLYIRVGRYYFSNPEARKLAVNFYGRLEALRSEELYDQVMDVVRHYGKESGAIWHSMQSAIPRDIAEVRR</sequence>
<evidence type="ECO:0000255" key="1">
    <source>
        <dbReference type="HAMAP-Rule" id="MF_00696"/>
    </source>
</evidence>
<organism>
    <name type="scientific">Pectobacterium carotovorum subsp. carotovorum (strain PC1)</name>
    <dbReference type="NCBI Taxonomy" id="561230"/>
    <lineage>
        <taxon>Bacteria</taxon>
        <taxon>Pseudomonadati</taxon>
        <taxon>Pseudomonadota</taxon>
        <taxon>Gammaproteobacteria</taxon>
        <taxon>Enterobacterales</taxon>
        <taxon>Pectobacteriaceae</taxon>
        <taxon>Pectobacterium</taxon>
    </lineage>
</organism>
<proteinExistence type="inferred from homology"/>
<gene>
    <name evidence="1" type="primary">fadR</name>
    <name type="ordered locus">PC1_1948</name>
</gene>
<reference key="1">
    <citation type="submission" date="2009-07" db="EMBL/GenBank/DDBJ databases">
        <title>Complete sequence of Pectobacterium carotovorum subsp. carotovorum PC1.</title>
        <authorList>
            <consortium name="US DOE Joint Genome Institute"/>
            <person name="Lucas S."/>
            <person name="Copeland A."/>
            <person name="Lapidus A."/>
            <person name="Glavina del Rio T."/>
            <person name="Tice H."/>
            <person name="Bruce D."/>
            <person name="Goodwin L."/>
            <person name="Pitluck S."/>
            <person name="Munk A.C."/>
            <person name="Brettin T."/>
            <person name="Detter J.C."/>
            <person name="Han C."/>
            <person name="Tapia R."/>
            <person name="Larimer F."/>
            <person name="Land M."/>
            <person name="Hauser L."/>
            <person name="Kyrpides N."/>
            <person name="Mikhailova N."/>
            <person name="Balakrishnan V."/>
            <person name="Glasner J."/>
            <person name="Perna N.T."/>
        </authorList>
    </citation>
    <scope>NUCLEOTIDE SEQUENCE [LARGE SCALE GENOMIC DNA]</scope>
    <source>
        <strain>PC1</strain>
    </source>
</reference>
<keyword id="KW-0010">Activator</keyword>
<keyword id="KW-0963">Cytoplasm</keyword>
<keyword id="KW-0238">DNA-binding</keyword>
<keyword id="KW-0276">Fatty acid metabolism</keyword>
<keyword id="KW-0443">Lipid metabolism</keyword>
<keyword id="KW-0678">Repressor</keyword>
<keyword id="KW-0804">Transcription</keyword>
<keyword id="KW-0805">Transcription regulation</keyword>
<comment type="function">
    <text evidence="1">Multifunctional regulator of fatty acid metabolism.</text>
</comment>
<comment type="subunit">
    <text evidence="1">Homodimer.</text>
</comment>
<comment type="subcellular location">
    <subcellularLocation>
        <location evidence="1">Cytoplasm</location>
    </subcellularLocation>
</comment>